<keyword id="KW-0342">GTP-binding</keyword>
<keyword id="KW-0547">Nucleotide-binding</keyword>
<keyword id="KW-1185">Reference proteome</keyword>
<keyword id="KW-0677">Repeat</keyword>
<keyword id="KW-0690">Ribosome biogenesis</keyword>
<organism>
    <name type="scientific">Halalkalibacterium halodurans (strain ATCC BAA-125 / DSM 18197 / FERM 7344 / JCM 9153 / C-125)</name>
    <name type="common">Bacillus halodurans</name>
    <dbReference type="NCBI Taxonomy" id="272558"/>
    <lineage>
        <taxon>Bacteria</taxon>
        <taxon>Bacillati</taxon>
        <taxon>Bacillota</taxon>
        <taxon>Bacilli</taxon>
        <taxon>Bacillales</taxon>
        <taxon>Bacillaceae</taxon>
        <taxon>Halalkalibacterium (ex Joshi et al. 2022)</taxon>
    </lineage>
</organism>
<evidence type="ECO:0000255" key="1">
    <source>
        <dbReference type="HAMAP-Rule" id="MF_00195"/>
    </source>
</evidence>
<name>DER_HALH5</name>
<sequence>MSKPVIAIVGRPNVGKSTIFNRIVGERVAIVEDRPGVTRDRIYSHGEWLNREFNVIDTGGIEIGDEPLLVQMRAQAELAIKEADVIIFIVNGREGVTAADQEVAKLLFRSKKPVVLGVNKIDHPDMQEELYEFYSLGIGDPIPISGAHGLGLGDLLDACVEHFPEDEGDDYDEDTIRISLIGRPNVGKSSLVNAMLGEERVIVSNIPGTTRDAIDTAFSRDDQEYVLIDTAGMRKRGKVYESTEKYSVLRSLKAIERSDVVLVVLNGEEGIIEQDKKIAGYAHEAGRAIIIVVNKWDAVEKDDKTLHRFQQKIRDEFQFLDYAPVLFVSAKTKQRLQHVLPAVKKVSENHNLRVPTHVLNDLVMDAVAMNPTPTDHGKRLKINYVTQVAVGPPTFVFFVNDPELMHFSYARFLENRLRDTFEFEGTPIKIIARKKND</sequence>
<feature type="chain" id="PRO_0000178963" description="GTPase Der">
    <location>
        <begin position="1"/>
        <end position="437"/>
    </location>
</feature>
<feature type="domain" description="EngA-type G 1">
    <location>
        <begin position="4"/>
        <end position="167"/>
    </location>
</feature>
<feature type="domain" description="EngA-type G 2">
    <location>
        <begin position="176"/>
        <end position="351"/>
    </location>
</feature>
<feature type="domain" description="KH-like" evidence="1">
    <location>
        <begin position="352"/>
        <end position="436"/>
    </location>
</feature>
<feature type="binding site" evidence="1">
    <location>
        <begin position="10"/>
        <end position="17"/>
    </location>
    <ligand>
        <name>GTP</name>
        <dbReference type="ChEBI" id="CHEBI:37565"/>
        <label>1</label>
    </ligand>
</feature>
<feature type="binding site" evidence="1">
    <location>
        <begin position="57"/>
        <end position="61"/>
    </location>
    <ligand>
        <name>GTP</name>
        <dbReference type="ChEBI" id="CHEBI:37565"/>
        <label>1</label>
    </ligand>
</feature>
<feature type="binding site" evidence="1">
    <location>
        <begin position="119"/>
        <end position="122"/>
    </location>
    <ligand>
        <name>GTP</name>
        <dbReference type="ChEBI" id="CHEBI:37565"/>
        <label>1</label>
    </ligand>
</feature>
<feature type="binding site" evidence="1">
    <location>
        <begin position="182"/>
        <end position="189"/>
    </location>
    <ligand>
        <name>GTP</name>
        <dbReference type="ChEBI" id="CHEBI:37565"/>
        <label>2</label>
    </ligand>
</feature>
<feature type="binding site" evidence="1">
    <location>
        <begin position="229"/>
        <end position="233"/>
    </location>
    <ligand>
        <name>GTP</name>
        <dbReference type="ChEBI" id="CHEBI:37565"/>
        <label>2</label>
    </ligand>
</feature>
<feature type="binding site" evidence="1">
    <location>
        <begin position="294"/>
        <end position="297"/>
    </location>
    <ligand>
        <name>GTP</name>
        <dbReference type="ChEBI" id="CHEBI:37565"/>
        <label>2</label>
    </ligand>
</feature>
<reference key="1">
    <citation type="journal article" date="2000" name="Nucleic Acids Res.">
        <title>Complete genome sequence of the alkaliphilic bacterium Bacillus halodurans and genomic sequence comparison with Bacillus subtilis.</title>
        <authorList>
            <person name="Takami H."/>
            <person name="Nakasone K."/>
            <person name="Takaki Y."/>
            <person name="Maeno G."/>
            <person name="Sasaki R."/>
            <person name="Masui N."/>
            <person name="Fuji F."/>
            <person name="Hirama C."/>
            <person name="Nakamura Y."/>
            <person name="Ogasawara N."/>
            <person name="Kuhara S."/>
            <person name="Horikoshi K."/>
        </authorList>
    </citation>
    <scope>NUCLEOTIDE SEQUENCE [LARGE SCALE GENOMIC DNA]</scope>
    <source>
        <strain>ATCC BAA-125 / DSM 18197 / FERM 7344 / JCM 9153 / C-125</strain>
    </source>
</reference>
<proteinExistence type="inferred from homology"/>
<protein>
    <recommendedName>
        <fullName evidence="1">GTPase Der</fullName>
    </recommendedName>
    <alternativeName>
        <fullName evidence="1">GTP-binding protein EngA</fullName>
    </alternativeName>
</protein>
<dbReference type="EMBL" id="BA000004">
    <property type="protein sequence ID" value="BAB05357.1"/>
    <property type="molecule type" value="Genomic_DNA"/>
</dbReference>
<dbReference type="PIR" id="F83854">
    <property type="entry name" value="F83854"/>
</dbReference>
<dbReference type="RefSeq" id="WP_010897801.1">
    <property type="nucleotide sequence ID" value="NC_002570.2"/>
</dbReference>
<dbReference type="SMR" id="Q9KCD4"/>
<dbReference type="STRING" id="272558.gene:10727536"/>
<dbReference type="KEGG" id="bha:BH1638"/>
<dbReference type="eggNOG" id="COG1160">
    <property type="taxonomic scope" value="Bacteria"/>
</dbReference>
<dbReference type="HOGENOM" id="CLU_016077_6_2_9"/>
<dbReference type="OrthoDB" id="9805918at2"/>
<dbReference type="Proteomes" id="UP000001258">
    <property type="component" value="Chromosome"/>
</dbReference>
<dbReference type="GO" id="GO:0005525">
    <property type="term" value="F:GTP binding"/>
    <property type="evidence" value="ECO:0007669"/>
    <property type="project" value="UniProtKB-UniRule"/>
</dbReference>
<dbReference type="GO" id="GO:0043022">
    <property type="term" value="F:ribosome binding"/>
    <property type="evidence" value="ECO:0007669"/>
    <property type="project" value="TreeGrafter"/>
</dbReference>
<dbReference type="GO" id="GO:0042254">
    <property type="term" value="P:ribosome biogenesis"/>
    <property type="evidence" value="ECO:0007669"/>
    <property type="project" value="UniProtKB-KW"/>
</dbReference>
<dbReference type="CDD" id="cd01894">
    <property type="entry name" value="EngA1"/>
    <property type="match status" value="1"/>
</dbReference>
<dbReference type="CDD" id="cd01895">
    <property type="entry name" value="EngA2"/>
    <property type="match status" value="1"/>
</dbReference>
<dbReference type="FunFam" id="3.30.300.20:FF:000004">
    <property type="entry name" value="GTPase Der"/>
    <property type="match status" value="1"/>
</dbReference>
<dbReference type="FunFam" id="3.40.50.300:FF:000040">
    <property type="entry name" value="GTPase Der"/>
    <property type="match status" value="1"/>
</dbReference>
<dbReference type="FunFam" id="3.40.50.300:FF:000057">
    <property type="entry name" value="GTPase Der"/>
    <property type="match status" value="1"/>
</dbReference>
<dbReference type="Gene3D" id="3.30.300.20">
    <property type="match status" value="1"/>
</dbReference>
<dbReference type="Gene3D" id="3.40.50.300">
    <property type="entry name" value="P-loop containing nucleotide triphosphate hydrolases"/>
    <property type="match status" value="2"/>
</dbReference>
<dbReference type="HAMAP" id="MF_00195">
    <property type="entry name" value="GTPase_Der"/>
    <property type="match status" value="1"/>
</dbReference>
<dbReference type="InterPro" id="IPR031166">
    <property type="entry name" value="G_ENGA"/>
</dbReference>
<dbReference type="InterPro" id="IPR006073">
    <property type="entry name" value="GTP-bd"/>
</dbReference>
<dbReference type="InterPro" id="IPR016484">
    <property type="entry name" value="GTPase_Der"/>
</dbReference>
<dbReference type="InterPro" id="IPR032859">
    <property type="entry name" value="KH_dom-like"/>
</dbReference>
<dbReference type="InterPro" id="IPR015946">
    <property type="entry name" value="KH_dom-like_a/b"/>
</dbReference>
<dbReference type="InterPro" id="IPR027417">
    <property type="entry name" value="P-loop_NTPase"/>
</dbReference>
<dbReference type="InterPro" id="IPR005225">
    <property type="entry name" value="Small_GTP-bd"/>
</dbReference>
<dbReference type="NCBIfam" id="TIGR03594">
    <property type="entry name" value="GTPase_EngA"/>
    <property type="match status" value="1"/>
</dbReference>
<dbReference type="NCBIfam" id="TIGR00231">
    <property type="entry name" value="small_GTP"/>
    <property type="match status" value="2"/>
</dbReference>
<dbReference type="PANTHER" id="PTHR43834">
    <property type="entry name" value="GTPASE DER"/>
    <property type="match status" value="1"/>
</dbReference>
<dbReference type="PANTHER" id="PTHR43834:SF6">
    <property type="entry name" value="GTPASE DER"/>
    <property type="match status" value="1"/>
</dbReference>
<dbReference type="Pfam" id="PF14714">
    <property type="entry name" value="KH_dom-like"/>
    <property type="match status" value="1"/>
</dbReference>
<dbReference type="Pfam" id="PF01926">
    <property type="entry name" value="MMR_HSR1"/>
    <property type="match status" value="2"/>
</dbReference>
<dbReference type="PIRSF" id="PIRSF006485">
    <property type="entry name" value="GTP-binding_EngA"/>
    <property type="match status" value="1"/>
</dbReference>
<dbReference type="PRINTS" id="PR00326">
    <property type="entry name" value="GTP1OBG"/>
</dbReference>
<dbReference type="SUPFAM" id="SSF52540">
    <property type="entry name" value="P-loop containing nucleoside triphosphate hydrolases"/>
    <property type="match status" value="2"/>
</dbReference>
<dbReference type="PROSITE" id="PS51712">
    <property type="entry name" value="G_ENGA"/>
    <property type="match status" value="2"/>
</dbReference>
<gene>
    <name evidence="1" type="primary">der</name>
    <name type="synonym">engA</name>
    <name type="ordered locus">BH1638</name>
</gene>
<accession>Q9KCD4</accession>
<comment type="function">
    <text evidence="1">GTPase that plays an essential role in the late steps of ribosome biogenesis.</text>
</comment>
<comment type="subunit">
    <text evidence="1">Associates with the 50S ribosomal subunit.</text>
</comment>
<comment type="similarity">
    <text evidence="1">Belongs to the TRAFAC class TrmE-Era-EngA-EngB-Septin-like GTPase superfamily. EngA (Der) GTPase family.</text>
</comment>